<feature type="chain" id="PRO_0000379032" description="Protein pendolino">
    <location>
        <begin position="1"/>
        <end position="244"/>
    </location>
</feature>
<feature type="domain" description="UBC core" evidence="1">
    <location>
        <begin position="20"/>
        <end position="176"/>
    </location>
</feature>
<feature type="splice variant" id="VSP_037634" description="In isoform A and isoform C." evidence="4">
    <location>
        <begin position="1"/>
        <end position="30"/>
    </location>
</feature>
<feature type="splice variant" id="VSP_062305" description="In isoform C." evidence="6">
    <location>
        <begin position="86"/>
        <end position="91"/>
    </location>
</feature>
<feature type="splice variant" id="VSP_062306" description="In isoform C." evidence="6">
    <location>
        <begin position="144"/>
        <end position="168"/>
    </location>
</feature>
<gene>
    <name evidence="5 7" type="primary">peo</name>
    <name evidence="7" type="synonym">cbx</name>
    <name evidence="5" type="ORF">CG10536</name>
    <name evidence="7" type="ORF">CG46338</name>
</gene>
<sequence>MTLDLDAHKKDDKLLITTIQQEYKILAEYKMIESEKLSGIYVIPSYANSLQWFGVFFGRQGLYAESVFRFTILLPDRFPDDKSLPSIIFQQDVIHPHVCPYTHSLDVSHAFPEWRCGEDHLWQLLKYLQVIFSDPLDSIRGIEVDKLKNSEAAELLMNNKEEYVARVQENIKESKEHIFDTPPTEDPHYIVFEKFQQDVHGPVLERIKAGRSKLTEPSAQQANGGHATGLSWVKEGEFKPLSIE</sequence>
<keyword id="KW-0025">Alternative splicing</keyword>
<keyword id="KW-0158">Chromosome</keyword>
<keyword id="KW-0235">DNA replication</keyword>
<keyword id="KW-0539">Nucleus</keyword>
<keyword id="KW-1185">Reference proteome</keyword>
<protein>
    <recommendedName>
        <fullName evidence="5">Protein pendolino</fullName>
    </recommendedName>
</protein>
<organism evidence="8">
    <name type="scientific">Drosophila melanogaster</name>
    <name type="common">Fruit fly</name>
    <dbReference type="NCBI Taxonomy" id="7227"/>
    <lineage>
        <taxon>Eukaryota</taxon>
        <taxon>Metazoa</taxon>
        <taxon>Ecdysozoa</taxon>
        <taxon>Arthropoda</taxon>
        <taxon>Hexapoda</taxon>
        <taxon>Insecta</taxon>
        <taxon>Pterygota</taxon>
        <taxon>Neoptera</taxon>
        <taxon>Endopterygota</taxon>
        <taxon>Diptera</taxon>
        <taxon>Brachycera</taxon>
        <taxon>Muscomorpha</taxon>
        <taxon>Ephydroidea</taxon>
        <taxon>Drosophilidae</taxon>
        <taxon>Drosophila</taxon>
        <taxon>Sophophora</taxon>
    </lineage>
</organism>
<comment type="function">
    <text evidence="2">Required for efficient DNA replication, probably through involvement in telomere replication (PubMed:26110638). May have a role in telomere capping of heterochromatic chromosome ends (PubMed:26110638).</text>
</comment>
<comment type="subunit">
    <text evidence="2">Interacts (via N-terminus) with cav/HOAP (via N-terminus); the interaction is direct (PubMed:26110638). Probably interacts (via N-terminus and UBC domain) with ver and moi (PubMed:26110638).</text>
</comment>
<comment type="subcellular location">
    <subcellularLocation>
        <location evidence="2">Nucleus</location>
        <location evidence="2">Nucleolus</location>
    </subcellularLocation>
    <subcellularLocation>
        <location evidence="2">Chromosome</location>
    </subcellularLocation>
    <text evidence="2">Associates with multiple polytene bands and interbands on chromosomes.</text>
</comment>
<comment type="alternative products">
    <event type="alternative splicing"/>
    <isoform>
        <id>Q7K4V4-1</id>
        <name evidence="7">B</name>
        <sequence type="displayed"/>
    </isoform>
    <isoform>
        <id>Q7K4V4-2</id>
        <name evidence="7">A</name>
        <sequence type="described" ref="VSP_037634"/>
    </isoform>
    <isoform>
        <id>Q7K4V4-3</id>
        <name evidence="7">C</name>
        <sequence type="described" ref="VSP_037634 VSP_062305 VSP_062306"/>
    </isoform>
    <text evidence="2">At least three isoforms of varying sizes are expressed.</text>
</comment>
<comment type="disruption phenotype">
    <text evidence="2 3">Embryonic lethal (PubMed:26110638). Hypomorphic mutants are late larval/pupal lethal and display frequent telomeric fusions in larval mitotic brain cells (PubMed:26110638, PubMed:26786804). Unlike other telomeric fusion mutants these fusion events preferentially occur between heterochromatin-associated telomeres (PubMed:26110638, PubMed:26786804).</text>
</comment>
<comment type="miscellaneous">
    <text evidence="5">Multiple telomeric fusions result in multicentric linear chromosomes that resemble little trains of chromosomes, hence the name 'pendolino', the name of an Italian train.</text>
</comment>
<comment type="similarity">
    <text evidence="1">Belongs to the ubiquitin-conjugating enzyme family. FTS subfamily.</text>
</comment>
<comment type="caution">
    <text evidence="2">Lacks the conserved Cys residue necessary for ubiquitin-conjugating enzyme E2 activity.</text>
</comment>
<evidence type="ECO:0000255" key="1">
    <source>
        <dbReference type="PROSITE-ProRule" id="PRU00388"/>
    </source>
</evidence>
<evidence type="ECO:0000269" key="2">
    <source>
    </source>
</evidence>
<evidence type="ECO:0000269" key="3">
    <source>
    </source>
</evidence>
<evidence type="ECO:0000303" key="4">
    <source>
    </source>
</evidence>
<evidence type="ECO:0000303" key="5">
    <source>
    </source>
</evidence>
<evidence type="ECO:0000305" key="6"/>
<evidence type="ECO:0000312" key="7">
    <source>
        <dbReference type="FlyBase" id="FBgn0288856"/>
    </source>
</evidence>
<evidence type="ECO:0000312" key="8">
    <source>
        <dbReference type="Proteomes" id="UP000000803"/>
    </source>
</evidence>
<accession>Q7K4V4</accession>
<accession>A0A0B4KF51</accession>
<accession>Q7JRK3</accession>
<proteinExistence type="evidence at protein level"/>
<reference key="1">
    <citation type="journal article" date="2000" name="Science">
        <title>The genome sequence of Drosophila melanogaster.</title>
        <authorList>
            <person name="Adams M.D."/>
            <person name="Celniker S.E."/>
            <person name="Holt R.A."/>
            <person name="Evans C.A."/>
            <person name="Gocayne J.D."/>
            <person name="Amanatides P.G."/>
            <person name="Scherer S.E."/>
            <person name="Li P.W."/>
            <person name="Hoskins R.A."/>
            <person name="Galle R.F."/>
            <person name="George R.A."/>
            <person name="Lewis S.E."/>
            <person name="Richards S."/>
            <person name="Ashburner M."/>
            <person name="Henderson S.N."/>
            <person name="Sutton G.G."/>
            <person name="Wortman J.R."/>
            <person name="Yandell M.D."/>
            <person name="Zhang Q."/>
            <person name="Chen L.X."/>
            <person name="Brandon R.C."/>
            <person name="Rogers Y.-H.C."/>
            <person name="Blazej R.G."/>
            <person name="Champe M."/>
            <person name="Pfeiffer B.D."/>
            <person name="Wan K.H."/>
            <person name="Doyle C."/>
            <person name="Baxter E.G."/>
            <person name="Helt G."/>
            <person name="Nelson C.R."/>
            <person name="Miklos G.L.G."/>
            <person name="Abril J.F."/>
            <person name="Agbayani A."/>
            <person name="An H.-J."/>
            <person name="Andrews-Pfannkoch C."/>
            <person name="Baldwin D."/>
            <person name="Ballew R.M."/>
            <person name="Basu A."/>
            <person name="Baxendale J."/>
            <person name="Bayraktaroglu L."/>
            <person name="Beasley E.M."/>
            <person name="Beeson K.Y."/>
            <person name="Benos P.V."/>
            <person name="Berman B.P."/>
            <person name="Bhandari D."/>
            <person name="Bolshakov S."/>
            <person name="Borkova D."/>
            <person name="Botchan M.R."/>
            <person name="Bouck J."/>
            <person name="Brokstein P."/>
            <person name="Brottier P."/>
            <person name="Burtis K.C."/>
            <person name="Busam D.A."/>
            <person name="Butler H."/>
            <person name="Cadieu E."/>
            <person name="Center A."/>
            <person name="Chandra I."/>
            <person name="Cherry J.M."/>
            <person name="Cawley S."/>
            <person name="Dahlke C."/>
            <person name="Davenport L.B."/>
            <person name="Davies P."/>
            <person name="de Pablos B."/>
            <person name="Delcher A."/>
            <person name="Deng Z."/>
            <person name="Mays A.D."/>
            <person name="Dew I."/>
            <person name="Dietz S.M."/>
            <person name="Dodson K."/>
            <person name="Doup L.E."/>
            <person name="Downes M."/>
            <person name="Dugan-Rocha S."/>
            <person name="Dunkov B.C."/>
            <person name="Dunn P."/>
            <person name="Durbin K.J."/>
            <person name="Evangelista C.C."/>
            <person name="Ferraz C."/>
            <person name="Ferriera S."/>
            <person name="Fleischmann W."/>
            <person name="Fosler C."/>
            <person name="Gabrielian A.E."/>
            <person name="Garg N.S."/>
            <person name="Gelbart W.M."/>
            <person name="Glasser K."/>
            <person name="Glodek A."/>
            <person name="Gong F."/>
            <person name="Gorrell J.H."/>
            <person name="Gu Z."/>
            <person name="Guan P."/>
            <person name="Harris M."/>
            <person name="Harris N.L."/>
            <person name="Harvey D.A."/>
            <person name="Heiman T.J."/>
            <person name="Hernandez J.R."/>
            <person name="Houck J."/>
            <person name="Hostin D."/>
            <person name="Houston K.A."/>
            <person name="Howland T.J."/>
            <person name="Wei M.-H."/>
            <person name="Ibegwam C."/>
            <person name="Jalali M."/>
            <person name="Kalush F."/>
            <person name="Karpen G.H."/>
            <person name="Ke Z."/>
            <person name="Kennison J.A."/>
            <person name="Ketchum K.A."/>
            <person name="Kimmel B.E."/>
            <person name="Kodira C.D."/>
            <person name="Kraft C.L."/>
            <person name="Kravitz S."/>
            <person name="Kulp D."/>
            <person name="Lai Z."/>
            <person name="Lasko P."/>
            <person name="Lei Y."/>
            <person name="Levitsky A.A."/>
            <person name="Li J.H."/>
            <person name="Li Z."/>
            <person name="Liang Y."/>
            <person name="Lin X."/>
            <person name="Liu X."/>
            <person name="Mattei B."/>
            <person name="McIntosh T.C."/>
            <person name="McLeod M.P."/>
            <person name="McPherson D."/>
            <person name="Merkulov G."/>
            <person name="Milshina N.V."/>
            <person name="Mobarry C."/>
            <person name="Morris J."/>
            <person name="Moshrefi A."/>
            <person name="Mount S.M."/>
            <person name="Moy M."/>
            <person name="Murphy B."/>
            <person name="Murphy L."/>
            <person name="Muzny D.M."/>
            <person name="Nelson D.L."/>
            <person name="Nelson D.R."/>
            <person name="Nelson K.A."/>
            <person name="Nixon K."/>
            <person name="Nusskern D.R."/>
            <person name="Pacleb J.M."/>
            <person name="Palazzolo M."/>
            <person name="Pittman G.S."/>
            <person name="Pan S."/>
            <person name="Pollard J."/>
            <person name="Puri V."/>
            <person name="Reese M.G."/>
            <person name="Reinert K."/>
            <person name="Remington K."/>
            <person name="Saunders R.D.C."/>
            <person name="Scheeler F."/>
            <person name="Shen H."/>
            <person name="Shue B.C."/>
            <person name="Siden-Kiamos I."/>
            <person name="Simpson M."/>
            <person name="Skupski M.P."/>
            <person name="Smith T.J."/>
            <person name="Spier E."/>
            <person name="Spradling A.C."/>
            <person name="Stapleton M."/>
            <person name="Strong R."/>
            <person name="Sun E."/>
            <person name="Svirskas R."/>
            <person name="Tector C."/>
            <person name="Turner R."/>
            <person name="Venter E."/>
            <person name="Wang A.H."/>
            <person name="Wang X."/>
            <person name="Wang Z.-Y."/>
            <person name="Wassarman D.A."/>
            <person name="Weinstock G.M."/>
            <person name="Weissenbach J."/>
            <person name="Williams S.M."/>
            <person name="Woodage T."/>
            <person name="Worley K.C."/>
            <person name="Wu D."/>
            <person name="Yang S."/>
            <person name="Yao Q.A."/>
            <person name="Ye J."/>
            <person name="Yeh R.-F."/>
            <person name="Zaveri J.S."/>
            <person name="Zhan M."/>
            <person name="Zhang G."/>
            <person name="Zhao Q."/>
            <person name="Zheng L."/>
            <person name="Zheng X.H."/>
            <person name="Zhong F.N."/>
            <person name="Zhong W."/>
            <person name="Zhou X."/>
            <person name="Zhu S.C."/>
            <person name="Zhu X."/>
            <person name="Smith H.O."/>
            <person name="Gibbs R.A."/>
            <person name="Myers E.W."/>
            <person name="Rubin G.M."/>
            <person name="Venter J.C."/>
        </authorList>
    </citation>
    <scope>NUCLEOTIDE SEQUENCE [LARGE SCALE GENOMIC DNA]</scope>
    <source>
        <strain>Berkeley</strain>
    </source>
</reference>
<reference key="2">
    <citation type="journal article" date="2002" name="Genome Biol.">
        <title>Annotation of the Drosophila melanogaster euchromatic genome: a systematic review.</title>
        <authorList>
            <person name="Misra S."/>
            <person name="Crosby M.A."/>
            <person name="Mungall C.J."/>
            <person name="Matthews B.B."/>
            <person name="Campbell K.S."/>
            <person name="Hradecky P."/>
            <person name="Huang Y."/>
            <person name="Kaminker J.S."/>
            <person name="Millburn G.H."/>
            <person name="Prochnik S.E."/>
            <person name="Smith C.D."/>
            <person name="Tupy J.L."/>
            <person name="Whitfield E.J."/>
            <person name="Bayraktaroglu L."/>
            <person name="Berman B.P."/>
            <person name="Bettencourt B.R."/>
            <person name="Celniker S.E."/>
            <person name="de Grey A.D.N.J."/>
            <person name="Drysdale R.A."/>
            <person name="Harris N.L."/>
            <person name="Richter J."/>
            <person name="Russo S."/>
            <person name="Schroeder A.J."/>
            <person name="Shu S.Q."/>
            <person name="Stapleton M."/>
            <person name="Yamada C."/>
            <person name="Ashburner M."/>
            <person name="Gelbart W.M."/>
            <person name="Rubin G.M."/>
            <person name="Lewis S.E."/>
        </authorList>
    </citation>
    <scope>GENOME REANNOTATION</scope>
    <source>
        <strain>Berkeley</strain>
    </source>
</reference>
<reference key="3">
    <citation type="journal article" date="2002" name="Genome Biol.">
        <title>A Drosophila full-length cDNA resource.</title>
        <authorList>
            <person name="Stapleton M."/>
            <person name="Carlson J.W."/>
            <person name="Brokstein P."/>
            <person name="Yu C."/>
            <person name="Champe M."/>
            <person name="George R.A."/>
            <person name="Guarin H."/>
            <person name="Kronmiller B."/>
            <person name="Pacleb J.M."/>
            <person name="Park S."/>
            <person name="Wan K.H."/>
            <person name="Rubin G.M."/>
            <person name="Celniker S.E."/>
        </authorList>
    </citation>
    <scope>NUCLEOTIDE SEQUENCE [LARGE SCALE MRNA] (ISOFORMS A AND B)</scope>
    <source>
        <strain>Berkeley</strain>
        <tissue>Embryo</tissue>
        <tissue>Head</tissue>
    </source>
</reference>
<reference key="4">
    <citation type="journal article" date="2015" name="Fly">
        <title>Telomere fusion in Drosophila: The role of subtelomeric chromatin.</title>
        <authorList>
            <person name="Marzullo M."/>
            <person name="Gatti M."/>
        </authorList>
    </citation>
    <scope>DISRUPTION PHENOTYPE</scope>
</reference>
<reference key="5">
    <citation type="journal article" date="2015" name="PLoS Genet.">
        <title>The Analysis of Pendolino (peo) Mutants Reveals Differences in the Fusigenic Potential among Drosophila Telomeres.</title>
        <authorList>
            <person name="Cenci G."/>
            <person name="Ciapponi L."/>
            <person name="Marzullo M."/>
            <person name="Raffa G.D."/>
            <person name="Morciano P."/>
            <person name="Raimondo D."/>
            <person name="Burla R."/>
            <person name="Saggio I."/>
            <person name="Gatti M."/>
        </authorList>
    </citation>
    <scope>FUNCTION</scope>
    <scope>INTERACTION WITH CAV; VER AND MOI</scope>
    <scope>SUBCELLULAR LOCATION</scope>
    <scope>ALTERNATIVE SPLICING</scope>
    <scope>DISRUPTION PHENOTYPE</scope>
</reference>
<dbReference type="EMBL" id="AE013599">
    <property type="protein sequence ID" value="AAF58884.1"/>
    <property type="molecule type" value="Genomic_DNA"/>
</dbReference>
<dbReference type="EMBL" id="AE013599">
    <property type="protein sequence ID" value="AAG22290.1"/>
    <property type="molecule type" value="Genomic_DNA"/>
</dbReference>
<dbReference type="EMBL" id="AE013599">
    <property type="protein sequence ID" value="AGB93370.1"/>
    <property type="molecule type" value="Genomic_DNA"/>
</dbReference>
<dbReference type="EMBL" id="AY051650">
    <property type="protein sequence ID" value="AAK93074.1"/>
    <property type="molecule type" value="mRNA"/>
</dbReference>
<dbReference type="EMBL" id="BT001497">
    <property type="protein sequence ID" value="AAN71252.1"/>
    <property type="molecule type" value="mRNA"/>
</dbReference>
<dbReference type="RefSeq" id="NP_001260837.1">
    <molecule id="Q7K4V4-3"/>
    <property type="nucleotide sequence ID" value="NM_001273908.1"/>
</dbReference>
<dbReference type="RefSeq" id="NP_524888.1">
    <molecule id="Q7K4V4-1"/>
    <property type="nucleotide sequence ID" value="NM_080149.4"/>
</dbReference>
<dbReference type="RefSeq" id="NP_724848.1">
    <molecule id="Q7K4V4-2"/>
    <property type="nucleotide sequence ID" value="NM_165716.2"/>
</dbReference>
<dbReference type="SMR" id="Q7K4V4"/>
<dbReference type="BioGRID" id="70725">
    <property type="interactions" value="2"/>
</dbReference>
<dbReference type="FunCoup" id="Q7K4V4">
    <property type="interactions" value="1033"/>
</dbReference>
<dbReference type="IntAct" id="Q7K4V4">
    <property type="interactions" value="5"/>
</dbReference>
<dbReference type="STRING" id="7227.FBpp0422656"/>
<dbReference type="PaxDb" id="7227-FBpp0087538"/>
<dbReference type="DNASU" id="47272"/>
<dbReference type="EnsemblMetazoa" id="FBtr0472692">
    <molecule id="Q7K4V4-2"/>
    <property type="protein sequence ID" value="FBpp0422655"/>
    <property type="gene ID" value="FBgn0288856"/>
</dbReference>
<dbReference type="EnsemblMetazoa" id="FBtr0472693">
    <molecule id="Q7K4V4-1"/>
    <property type="protein sequence ID" value="FBpp0422656"/>
    <property type="gene ID" value="FBgn0288856"/>
</dbReference>
<dbReference type="EnsemblMetazoa" id="FBtr0472694">
    <molecule id="Q7K4V4-3"/>
    <property type="protein sequence ID" value="FBpp0422657"/>
    <property type="gene ID" value="FBgn0288856"/>
</dbReference>
<dbReference type="GeneID" id="47272"/>
<dbReference type="KEGG" id="dme:Dmel_CG46338"/>
<dbReference type="UCSC" id="CG10536-RA">
    <property type="organism name" value="d. melanogaster"/>
</dbReference>
<dbReference type="UCSC" id="CG10536-RB">
    <molecule id="Q7K4V4-1"/>
    <property type="organism name" value="d. melanogaster"/>
</dbReference>
<dbReference type="AGR" id="FB:FBgn0288856"/>
<dbReference type="CTD" id="47272"/>
<dbReference type="FlyBase" id="FBgn0288856">
    <property type="gene designation" value="peo"/>
</dbReference>
<dbReference type="VEuPathDB" id="VectorBase:FBgn0288856"/>
<dbReference type="eggNOG" id="KOG0429">
    <property type="taxonomic scope" value="Eukaryota"/>
</dbReference>
<dbReference type="GeneTree" id="ENSGT00390000010125"/>
<dbReference type="InParanoid" id="Q7K4V4"/>
<dbReference type="OMA" id="WGFPEWR"/>
<dbReference type="OrthoDB" id="5596422at2759"/>
<dbReference type="PhylomeDB" id="Q7K4V4"/>
<dbReference type="BioGRID-ORCS" id="47272">
    <property type="hits" value="0 hits in 1 CRISPR screen"/>
</dbReference>
<dbReference type="ChiTaRS" id="Ubx">
    <property type="organism name" value="fly"/>
</dbReference>
<dbReference type="GenomeRNAi" id="47272"/>
<dbReference type="PRO" id="PR:Q7K4V4"/>
<dbReference type="Proteomes" id="UP000000803">
    <property type="component" value="Chromosome 2R"/>
</dbReference>
<dbReference type="Bgee" id="FBgn0285962">
    <property type="expression patterns" value="Expressed in proximal medullary amacrine neuron Pm4 in brain and 123 other cell types or tissues"/>
</dbReference>
<dbReference type="ExpressionAtlas" id="Q7K4V4">
    <property type="expression patterns" value="baseline and differential"/>
</dbReference>
<dbReference type="GO" id="GO:0005694">
    <property type="term" value="C:chromosome"/>
    <property type="evidence" value="ECO:0007669"/>
    <property type="project" value="UniProtKB-SubCell"/>
</dbReference>
<dbReference type="GO" id="GO:0005730">
    <property type="term" value="C:nucleolus"/>
    <property type="evidence" value="ECO:0007669"/>
    <property type="project" value="UniProtKB-SubCell"/>
</dbReference>
<dbReference type="GO" id="GO:0042742">
    <property type="term" value="P:defense response to bacterium"/>
    <property type="evidence" value="ECO:0000315"/>
    <property type="project" value="FlyBase"/>
</dbReference>
<dbReference type="GO" id="GO:0006260">
    <property type="term" value="P:DNA replication"/>
    <property type="evidence" value="ECO:0007669"/>
    <property type="project" value="UniProtKB-KW"/>
</dbReference>
<dbReference type="GO" id="GO:0007291">
    <property type="term" value="P:sperm individualization"/>
    <property type="evidence" value="ECO:0000315"/>
    <property type="project" value="FlyBase"/>
</dbReference>
<dbReference type="CDD" id="cd23814">
    <property type="entry name" value="UEV_AKTIP"/>
    <property type="match status" value="1"/>
</dbReference>
<dbReference type="FunFam" id="3.10.110.10:FF:000121">
    <property type="entry name" value="Protein crossbronx"/>
    <property type="match status" value="1"/>
</dbReference>
<dbReference type="Gene3D" id="3.10.110.10">
    <property type="entry name" value="Ubiquitin Conjugating Enzyme"/>
    <property type="match status" value="1"/>
</dbReference>
<dbReference type="InterPro" id="IPR050113">
    <property type="entry name" value="Ub_conjugating_enzyme"/>
</dbReference>
<dbReference type="InterPro" id="IPR000608">
    <property type="entry name" value="UBQ-conjugat_E2_core"/>
</dbReference>
<dbReference type="InterPro" id="IPR016135">
    <property type="entry name" value="UBQ-conjugating_enzyme/RWD"/>
</dbReference>
<dbReference type="PANTHER" id="PTHR24067">
    <property type="entry name" value="UBIQUITIN-CONJUGATING ENZYME E2"/>
    <property type="match status" value="1"/>
</dbReference>
<dbReference type="Pfam" id="PF00179">
    <property type="entry name" value="UQ_con"/>
    <property type="match status" value="1"/>
</dbReference>
<dbReference type="SMART" id="SM00212">
    <property type="entry name" value="UBCc"/>
    <property type="match status" value="1"/>
</dbReference>
<dbReference type="SUPFAM" id="SSF54495">
    <property type="entry name" value="UBC-like"/>
    <property type="match status" value="1"/>
</dbReference>
<dbReference type="PROSITE" id="PS50127">
    <property type="entry name" value="UBC_2"/>
    <property type="match status" value="1"/>
</dbReference>
<name>AKTP1_DROME</name>